<keyword id="KW-0240">DNA-directed RNA polymerase</keyword>
<keyword id="KW-0548">Nucleotidyltransferase</keyword>
<keyword id="KW-0804">Transcription</keyword>
<keyword id="KW-0808">Transferase</keyword>
<dbReference type="EC" id="2.7.7.6" evidence="1"/>
<dbReference type="EMBL" id="CP000436">
    <property type="protein sequence ID" value="ABI24365.1"/>
    <property type="molecule type" value="Genomic_DNA"/>
</dbReference>
<dbReference type="SMR" id="Q0I137"/>
<dbReference type="KEGG" id="hso:HS_0084"/>
<dbReference type="eggNOG" id="COG0202">
    <property type="taxonomic scope" value="Bacteria"/>
</dbReference>
<dbReference type="HOGENOM" id="CLU_053084_0_0_6"/>
<dbReference type="GO" id="GO:0005737">
    <property type="term" value="C:cytoplasm"/>
    <property type="evidence" value="ECO:0007669"/>
    <property type="project" value="UniProtKB-ARBA"/>
</dbReference>
<dbReference type="GO" id="GO:0000428">
    <property type="term" value="C:DNA-directed RNA polymerase complex"/>
    <property type="evidence" value="ECO:0007669"/>
    <property type="project" value="UniProtKB-KW"/>
</dbReference>
<dbReference type="GO" id="GO:0003677">
    <property type="term" value="F:DNA binding"/>
    <property type="evidence" value="ECO:0007669"/>
    <property type="project" value="UniProtKB-UniRule"/>
</dbReference>
<dbReference type="GO" id="GO:0003899">
    <property type="term" value="F:DNA-directed RNA polymerase activity"/>
    <property type="evidence" value="ECO:0007669"/>
    <property type="project" value="UniProtKB-UniRule"/>
</dbReference>
<dbReference type="GO" id="GO:0046983">
    <property type="term" value="F:protein dimerization activity"/>
    <property type="evidence" value="ECO:0007669"/>
    <property type="project" value="InterPro"/>
</dbReference>
<dbReference type="GO" id="GO:0006351">
    <property type="term" value="P:DNA-templated transcription"/>
    <property type="evidence" value="ECO:0007669"/>
    <property type="project" value="UniProtKB-UniRule"/>
</dbReference>
<dbReference type="CDD" id="cd06928">
    <property type="entry name" value="RNAP_alpha_NTD"/>
    <property type="match status" value="1"/>
</dbReference>
<dbReference type="FunFam" id="1.10.150.20:FF:000001">
    <property type="entry name" value="DNA-directed RNA polymerase subunit alpha"/>
    <property type="match status" value="1"/>
</dbReference>
<dbReference type="FunFam" id="2.170.120.12:FF:000001">
    <property type="entry name" value="DNA-directed RNA polymerase subunit alpha"/>
    <property type="match status" value="1"/>
</dbReference>
<dbReference type="Gene3D" id="1.10.150.20">
    <property type="entry name" value="5' to 3' exonuclease, C-terminal subdomain"/>
    <property type="match status" value="1"/>
</dbReference>
<dbReference type="Gene3D" id="2.170.120.12">
    <property type="entry name" value="DNA-directed RNA polymerase, insert domain"/>
    <property type="match status" value="1"/>
</dbReference>
<dbReference type="Gene3D" id="3.30.1360.10">
    <property type="entry name" value="RNA polymerase, RBP11-like subunit"/>
    <property type="match status" value="1"/>
</dbReference>
<dbReference type="HAMAP" id="MF_00059">
    <property type="entry name" value="RNApol_bact_RpoA"/>
    <property type="match status" value="1"/>
</dbReference>
<dbReference type="InterPro" id="IPR011262">
    <property type="entry name" value="DNA-dir_RNA_pol_insert"/>
</dbReference>
<dbReference type="InterPro" id="IPR011263">
    <property type="entry name" value="DNA-dir_RNA_pol_RpoA/D/Rpb3"/>
</dbReference>
<dbReference type="InterPro" id="IPR011773">
    <property type="entry name" value="DNA-dir_RpoA"/>
</dbReference>
<dbReference type="InterPro" id="IPR036603">
    <property type="entry name" value="RBP11-like"/>
</dbReference>
<dbReference type="InterPro" id="IPR011260">
    <property type="entry name" value="RNAP_asu_C"/>
</dbReference>
<dbReference type="InterPro" id="IPR036643">
    <property type="entry name" value="RNApol_insert_sf"/>
</dbReference>
<dbReference type="NCBIfam" id="NF003513">
    <property type="entry name" value="PRK05182.1-2"/>
    <property type="match status" value="1"/>
</dbReference>
<dbReference type="NCBIfam" id="NF003519">
    <property type="entry name" value="PRK05182.2-5"/>
    <property type="match status" value="1"/>
</dbReference>
<dbReference type="NCBIfam" id="TIGR02027">
    <property type="entry name" value="rpoA"/>
    <property type="match status" value="1"/>
</dbReference>
<dbReference type="Pfam" id="PF01000">
    <property type="entry name" value="RNA_pol_A_bac"/>
    <property type="match status" value="1"/>
</dbReference>
<dbReference type="Pfam" id="PF03118">
    <property type="entry name" value="RNA_pol_A_CTD"/>
    <property type="match status" value="1"/>
</dbReference>
<dbReference type="Pfam" id="PF01193">
    <property type="entry name" value="RNA_pol_L"/>
    <property type="match status" value="1"/>
</dbReference>
<dbReference type="SMART" id="SM00662">
    <property type="entry name" value="RPOLD"/>
    <property type="match status" value="1"/>
</dbReference>
<dbReference type="SUPFAM" id="SSF47789">
    <property type="entry name" value="C-terminal domain of RNA polymerase alpha subunit"/>
    <property type="match status" value="1"/>
</dbReference>
<dbReference type="SUPFAM" id="SSF56553">
    <property type="entry name" value="Insert subdomain of RNA polymerase alpha subunit"/>
    <property type="match status" value="1"/>
</dbReference>
<dbReference type="SUPFAM" id="SSF55257">
    <property type="entry name" value="RBP11-like subunits of RNA polymerase"/>
    <property type="match status" value="1"/>
</dbReference>
<name>RPOA_HISS1</name>
<proteinExistence type="inferred from homology"/>
<sequence>MQGSVTEFLKPRLVDIEQISSTHAKVILEPLERGFGHTLGNALRRILLSSMPGYAVTEVEIDGVLHEYSSKEGVQEDIIEVLLNLKGLAVKVQNKDNVFLTLSKSGIGPVVAADITHDGDVEIVNPDHVICHLTDENASINMRIRVQRGRGYVPASSRVHSLDEERPIGRLLVDACYSPVDRIAYNVQAARVEQRTDLDKLVIELETNGTIEPEEAIRRAATILAEQLDAFVDLRDVRQPEVKEEKPEFDPILLRPVDDLELTVRSANCLKAETIHYIGDLVQRTEVELLKTPNLGKKSLTEIKDVLVSRGLSLGMRLENWPPASIAED</sequence>
<feature type="chain" id="PRO_0000264504" description="DNA-directed RNA polymerase subunit alpha">
    <location>
        <begin position="1"/>
        <end position="329"/>
    </location>
</feature>
<feature type="region of interest" description="Alpha N-terminal domain (alpha-NTD)" evidence="1">
    <location>
        <begin position="1"/>
        <end position="235"/>
    </location>
</feature>
<feature type="region of interest" description="Alpha C-terminal domain (alpha-CTD)" evidence="1">
    <location>
        <begin position="249"/>
        <end position="329"/>
    </location>
</feature>
<evidence type="ECO:0000255" key="1">
    <source>
        <dbReference type="HAMAP-Rule" id="MF_00059"/>
    </source>
</evidence>
<comment type="function">
    <text evidence="1">DNA-dependent RNA polymerase catalyzes the transcription of DNA into RNA using the four ribonucleoside triphosphates as substrates.</text>
</comment>
<comment type="catalytic activity">
    <reaction evidence="1">
        <text>RNA(n) + a ribonucleoside 5'-triphosphate = RNA(n+1) + diphosphate</text>
        <dbReference type="Rhea" id="RHEA:21248"/>
        <dbReference type="Rhea" id="RHEA-COMP:14527"/>
        <dbReference type="Rhea" id="RHEA-COMP:17342"/>
        <dbReference type="ChEBI" id="CHEBI:33019"/>
        <dbReference type="ChEBI" id="CHEBI:61557"/>
        <dbReference type="ChEBI" id="CHEBI:140395"/>
        <dbReference type="EC" id="2.7.7.6"/>
    </reaction>
</comment>
<comment type="subunit">
    <text evidence="1">Homodimer. The RNAP catalytic core consists of 2 alpha, 1 beta, 1 beta' and 1 omega subunit. When a sigma factor is associated with the core the holoenzyme is formed, which can initiate transcription.</text>
</comment>
<comment type="domain">
    <text evidence="1">The N-terminal domain is essential for RNAP assembly and basal transcription, whereas the C-terminal domain is involved in interaction with transcriptional regulators and with upstream promoter elements.</text>
</comment>
<comment type="similarity">
    <text evidence="1">Belongs to the RNA polymerase alpha chain family.</text>
</comment>
<organism>
    <name type="scientific">Histophilus somni (strain 129Pt)</name>
    <name type="common">Haemophilus somnus</name>
    <dbReference type="NCBI Taxonomy" id="205914"/>
    <lineage>
        <taxon>Bacteria</taxon>
        <taxon>Pseudomonadati</taxon>
        <taxon>Pseudomonadota</taxon>
        <taxon>Gammaproteobacteria</taxon>
        <taxon>Pasteurellales</taxon>
        <taxon>Pasteurellaceae</taxon>
        <taxon>Histophilus</taxon>
    </lineage>
</organism>
<accession>Q0I137</accession>
<gene>
    <name evidence="1" type="primary">rpoA</name>
    <name type="ordered locus">HS_0084</name>
</gene>
<protein>
    <recommendedName>
        <fullName evidence="1">DNA-directed RNA polymerase subunit alpha</fullName>
        <shortName evidence="1">RNAP subunit alpha</shortName>
        <ecNumber evidence="1">2.7.7.6</ecNumber>
    </recommendedName>
    <alternativeName>
        <fullName evidence="1">RNA polymerase subunit alpha</fullName>
    </alternativeName>
    <alternativeName>
        <fullName evidence="1">Transcriptase subunit alpha</fullName>
    </alternativeName>
</protein>
<reference key="1">
    <citation type="journal article" date="2007" name="J. Bacteriol.">
        <title>Complete genome sequence of Haemophilus somnus (Histophilus somni) strain 129Pt and comparison to Haemophilus ducreyi 35000HP and Haemophilus influenzae Rd.</title>
        <authorList>
            <person name="Challacombe J.F."/>
            <person name="Duncan A.J."/>
            <person name="Brettin T.S."/>
            <person name="Bruce D."/>
            <person name="Chertkov O."/>
            <person name="Detter J.C."/>
            <person name="Han C.S."/>
            <person name="Misra M."/>
            <person name="Richardson P."/>
            <person name="Tapia R."/>
            <person name="Thayer N."/>
            <person name="Xie G."/>
            <person name="Inzana T.J."/>
        </authorList>
    </citation>
    <scope>NUCLEOTIDE SEQUENCE [LARGE SCALE GENOMIC DNA]</scope>
    <source>
        <strain>129Pt</strain>
    </source>
</reference>